<proteinExistence type="evidence at protein level"/>
<dbReference type="EMBL" id="FM955370">
    <property type="protein sequence ID" value="CAW30728.1"/>
    <property type="molecule type" value="Genomic_DNA"/>
</dbReference>
<dbReference type="EMBL" id="CP001956">
    <property type="protein sequence ID" value="ADE02297.1"/>
    <property type="molecule type" value="Genomic_DNA"/>
</dbReference>
<dbReference type="EMBL" id="AOHU01000027">
    <property type="protein sequence ID" value="ELY35857.1"/>
    <property type="molecule type" value="Genomic_DNA"/>
</dbReference>
<dbReference type="RefSeq" id="WP_004041400.1">
    <property type="nucleotide sequence ID" value="NC_013967.1"/>
</dbReference>
<dbReference type="SMR" id="D4GYG6"/>
<dbReference type="STRING" id="309800.HVO_1523"/>
<dbReference type="PaxDb" id="309800-C498_02965"/>
<dbReference type="EnsemblBacteria" id="ADE02297">
    <property type="protein sequence ID" value="ADE02297"/>
    <property type="gene ID" value="HVO_1523"/>
</dbReference>
<dbReference type="GeneID" id="31787473"/>
<dbReference type="KEGG" id="hvo:HVO_1523"/>
<dbReference type="PATRIC" id="fig|309800.29.peg.570"/>
<dbReference type="eggNOG" id="arCOG09256">
    <property type="taxonomic scope" value="Archaea"/>
</dbReference>
<dbReference type="HOGENOM" id="CLU_745158_0_0_2"/>
<dbReference type="OrthoDB" id="197991at2157"/>
<dbReference type="BioCyc" id="MetaCyc:MONOMER-20385"/>
<dbReference type="UniPathway" id="UPA00977"/>
<dbReference type="Proteomes" id="UP000008243">
    <property type="component" value="Chromosome"/>
</dbReference>
<dbReference type="Proteomes" id="UP000011532">
    <property type="component" value="Unassembled WGS sequence"/>
</dbReference>
<dbReference type="GO" id="GO:0005737">
    <property type="term" value="C:cytoplasm"/>
    <property type="evidence" value="ECO:0007669"/>
    <property type="project" value="UniProtKB-SubCell"/>
</dbReference>
<dbReference type="GO" id="GO:0005975">
    <property type="term" value="P:carbohydrate metabolic process"/>
    <property type="evidence" value="ECO:0007669"/>
    <property type="project" value="InterPro"/>
</dbReference>
<dbReference type="GO" id="GO:0045232">
    <property type="term" value="P:S-layer organization"/>
    <property type="evidence" value="ECO:0007669"/>
    <property type="project" value="UniProtKB-UniPathway"/>
</dbReference>
<dbReference type="InterPro" id="IPR008928">
    <property type="entry name" value="6-hairpin_glycosidase_sf"/>
</dbReference>
<dbReference type="SUPFAM" id="SSF48208">
    <property type="entry name" value="Six-hairpin glycosidases"/>
    <property type="match status" value="1"/>
</dbReference>
<protein>
    <recommendedName>
        <fullName>Archaeal glycosylation protein Q</fullName>
    </recommendedName>
</protein>
<accession>D4GYG6</accession>
<accession>B7VU78</accession>
<feature type="chain" id="PRO_0000428767" description="Archaeal glycosylation protein Q">
    <location>
        <begin position="1"/>
        <end position="371"/>
    </location>
</feature>
<feature type="region of interest" description="Disordered" evidence="1">
    <location>
        <begin position="19"/>
        <end position="39"/>
    </location>
</feature>
<feature type="mutagenesis site" description="No effect." evidence="2">
    <original>H</original>
    <variation>D</variation>
    <location>
        <position position="34"/>
    </location>
</feature>
<feature type="mutagenesis site" description="No effect." evidence="2">
    <original>E</original>
    <variation>A</variation>
    <location>
        <position position="37"/>
    </location>
</feature>
<feature type="mutagenesis site" description="Defects in N-glycosylation pathway." evidence="2">
    <original>T</original>
    <variation>L</variation>
    <location>
        <position position="38"/>
    </location>
</feature>
<feature type="mutagenesis site" description="No effect." evidence="2">
    <original>F</original>
    <variation>A</variation>
    <location>
        <position position="50"/>
    </location>
</feature>
<feature type="mutagenesis site" description="Defects in N-glycosylation pathway." evidence="2">
    <original>K</original>
    <variation>L</variation>
    <location>
        <position position="52"/>
    </location>
</feature>
<feature type="mutagenesis site" description="No effect." evidence="2">
    <original>E</original>
    <variation>K</variation>
    <location>
        <position position="55"/>
    </location>
</feature>
<feature type="mutagenesis site" description="No effect." evidence="2">
    <original>D</original>
    <variation>A</variation>
    <location>
        <position position="58"/>
    </location>
</feature>
<feature type="mutagenesis site" description="No effect." evidence="2">
    <original>E</original>
    <variation>A</variation>
    <location>
        <position position="59"/>
    </location>
</feature>
<feature type="mutagenesis site" description="No effect." evidence="2">
    <original>R</original>
    <variation>D</variation>
    <location>
        <position position="61"/>
    </location>
</feature>
<feature type="mutagenesis site" description="No effect." evidence="2">
    <original>A</original>
    <variation>Q</variation>
    <location>
        <position position="66"/>
    </location>
</feature>
<feature type="mutagenesis site" description="No effect." evidence="2">
    <original>H</original>
    <variation>D</variation>
    <location>
        <position position="81"/>
    </location>
</feature>
<feature type="mutagenesis site" description="No effect." evidence="2">
    <original>K</original>
    <variation>A</variation>
    <location>
        <position position="93"/>
    </location>
</feature>
<feature type="mutagenesis site" description="No effect." evidence="2">
    <original>W</original>
    <variation>A</variation>
    <location>
        <position position="104"/>
    </location>
</feature>
<feature type="mutagenesis site" description="No effect." evidence="2">
    <original>R</original>
    <variation>D</variation>
    <location>
        <position position="114"/>
    </location>
</feature>
<feature type="mutagenesis site" description="No effect." evidence="2">
    <original>N</original>
    <variation>A</variation>
    <location>
        <position position="118"/>
    </location>
</feature>
<feature type="mutagenesis site" description="No effect." evidence="2">
    <original>D</original>
    <variation>K</variation>
    <location>
        <position position="187"/>
    </location>
</feature>
<sequence>MTSLSDILASSAEAGLSLQRSDGSMPAGHNGPYHDPETPVRNTSHWLVTFLKAHELTDENRFRQAASDAVSYLLSEEARPHGHTFEHRQNDTKDRCNGLMGQAWSLEALALAARALDNERAAAVAADVFLSHPFCDKLKLWQRVDTDGTILGFDRTFNHQLWFAASGGLVAHTAPQEVSQRVRDFLDSLPSTIDLYENGLIRHPLRPSMDLSELAESVTHDVHRSMVRNHLLHYLRPPRSKRRLRNKAEGYHSFNLYALAILAREFPSHSVWSTDLLSDILEYTLSEEFREATTDNKFSHPYNPPGFEVPAAMETFSVGSYKEREMWVNEQIQHSFDPNTSLLTRGTDDKQTHAARLYEATRLDDYEIYLD</sequence>
<keyword id="KW-0963">Cytoplasm</keyword>
<keyword id="KW-1185">Reference proteome</keyword>
<name>AGLQ_HALVD</name>
<evidence type="ECO:0000256" key="1">
    <source>
        <dbReference type="SAM" id="MobiDB-lite"/>
    </source>
</evidence>
<evidence type="ECO:0000269" key="2">
    <source>
    </source>
</evidence>
<evidence type="ECO:0000305" key="3">
    <source>
    </source>
</evidence>
<organism>
    <name type="scientific">Haloferax volcanii (strain ATCC 29605 / DSM 3757 / JCM 8879 / NBRC 14742 / NCIMB 2012 / VKM B-1768 / DS2)</name>
    <name type="common">Halobacterium volcanii</name>
    <dbReference type="NCBI Taxonomy" id="309800"/>
    <lineage>
        <taxon>Archaea</taxon>
        <taxon>Methanobacteriati</taxon>
        <taxon>Methanobacteriota</taxon>
        <taxon>Stenosarchaea group</taxon>
        <taxon>Halobacteria</taxon>
        <taxon>Halobacteriales</taxon>
        <taxon>Haloferacaceae</taxon>
        <taxon>Haloferax</taxon>
    </lineage>
</organism>
<comment type="function">
    <text evidence="2">Putative isomerase involved in the N-glycosylation pathway. Required for the appearance of the methyl ester of hexuronic acid found at position four of the pentasaccharide N-linked to the S-layer glycoprotein. Either involved in preparing the third sugar for attachment of the fourth pentasaccharide subunit or processing the fourth sugar prior to its addition to the lipid-linked trisaccharide.</text>
</comment>
<comment type="pathway">
    <text evidence="2">Cell surface structure biogenesis; S-layer biogenesis.</text>
</comment>
<comment type="subcellular location">
    <subcellularLocation>
        <location evidence="3">Cytoplasm</location>
    </subcellularLocation>
</comment>
<comment type="disruption phenotype">
    <text evidence="2">Defects in N-glycosylation pathway, characterized by impaired addition of the fourth sugar of the pentasaccharide: both dolichol phosphate, the lipid carrier used in H.volcanii N-glycosylation, and modified S-layer glycoprotein Asn residues only present the first three subunits of the pentasaccharide.</text>
</comment>
<gene>
    <name type="primary">aglQ</name>
    <name type="ordered locus">HVO_1523</name>
    <name type="ORF">C498_02965</name>
</gene>
<reference key="1">
    <citation type="journal article" date="2009" name="J. Bacteriol.">
        <title>Manual annotation, transcriptional analysis, and protein expression studies reveal novel genes in the agl cluster responsible for N glycosylation in the halophilic archaeon Haloferax volcanii.</title>
        <authorList>
            <person name="Yurist-Doutsch S."/>
            <person name="Eichler J."/>
        </authorList>
    </citation>
    <scope>NUCLEOTIDE SEQUENCE [GENOMIC DNA]</scope>
    <scope>GENE NAME</scope>
</reference>
<reference key="2">
    <citation type="journal article" date="2010" name="PLoS ONE">
        <title>The complete genome sequence of Haloferax volcanii DS2, a model archaeon.</title>
        <authorList>
            <person name="Hartman A.L."/>
            <person name="Norais C."/>
            <person name="Badger J.H."/>
            <person name="Delmas S."/>
            <person name="Haldenby S."/>
            <person name="Madupu R."/>
            <person name="Robinson J."/>
            <person name="Khouri H."/>
            <person name="Ren Q."/>
            <person name="Lowe T.M."/>
            <person name="Maupin-Furlow J."/>
            <person name="Pohlschroder M."/>
            <person name="Daniels C."/>
            <person name="Pfeiffer F."/>
            <person name="Allers T."/>
            <person name="Eisen J.A."/>
        </authorList>
    </citation>
    <scope>NUCLEOTIDE SEQUENCE [LARGE SCALE GENOMIC DNA]</scope>
    <source>
        <strain>ATCC 29605 / DSM 3757 / JCM 8879 / NBRC 14742 / NCIMB 2012 / VKM B-1768 / DS2</strain>
    </source>
</reference>
<reference key="3">
    <citation type="journal article" date="2014" name="PLoS Genet.">
        <title>Phylogenetically driven sequencing of extremely halophilic archaea reveals strategies for static and dynamic osmo-response.</title>
        <authorList>
            <person name="Becker E.A."/>
            <person name="Seitzer P.M."/>
            <person name="Tritt A."/>
            <person name="Larsen D."/>
            <person name="Krusor M."/>
            <person name="Yao A.I."/>
            <person name="Wu D."/>
            <person name="Madern D."/>
            <person name="Eisen J.A."/>
            <person name="Darling A.E."/>
            <person name="Facciotti M.T."/>
        </authorList>
    </citation>
    <scope>NUCLEOTIDE SEQUENCE [LARGE SCALE GENOMIC DNA]</scope>
    <source>
        <strain>ATCC 29605 / DSM 3757 / JCM 8879 / NBRC 14742 / NCIMB 2012 / VKM B-1768 / DS2</strain>
    </source>
</reference>
<reference key="4">
    <citation type="journal article" date="2013" name="PLoS ONE">
        <title>AglQ is a novel component of the Haloferax volcanii N-glycosylation pathway.</title>
        <authorList>
            <person name="Arbiv A."/>
            <person name="Yurist-Doutsch S."/>
            <person name="Guan Z."/>
            <person name="Eichler J."/>
        </authorList>
    </citation>
    <scope>FUNCTION</scope>
    <scope>SUBCELLULAR LOCATION</scope>
    <scope>PATHWAY</scope>
    <scope>DISRUPTION PHENOTYPE</scope>
    <scope>MUTAGENESIS OF HIS-34; GLU-37; THR-38; PHE-50; LYS-52; GLU-55; ASP-58; GLU-59; ARG-61; ALA-66; HIS-81; LYS-93; TRP-104; ARG-114; ASN-118 AND ASP-187</scope>
</reference>